<organism>
    <name type="scientific">Bacillus cereus (strain ATCC 14579 / DSM 31 / CCUG 7414 / JCM 2152 / NBRC 15305 / NCIMB 9373 / NCTC 2599 / NRRL B-3711)</name>
    <dbReference type="NCBI Taxonomy" id="226900"/>
    <lineage>
        <taxon>Bacteria</taxon>
        <taxon>Bacillati</taxon>
        <taxon>Bacillota</taxon>
        <taxon>Bacilli</taxon>
        <taxon>Bacillales</taxon>
        <taxon>Bacillaceae</taxon>
        <taxon>Bacillus</taxon>
        <taxon>Bacillus cereus group</taxon>
    </lineage>
</organism>
<gene>
    <name evidence="1" type="primary">rimM</name>
    <name type="ordered locus">BC_3840</name>
</gene>
<proteinExistence type="inferred from homology"/>
<name>RIMM_BACCR</name>
<evidence type="ECO:0000255" key="1">
    <source>
        <dbReference type="HAMAP-Rule" id="MF_00014"/>
    </source>
</evidence>
<evidence type="ECO:0000305" key="2"/>
<dbReference type="EMBL" id="AE016877">
    <property type="protein sequence ID" value="AAP10762.1"/>
    <property type="status" value="ALT_INIT"/>
    <property type="molecule type" value="Genomic_DNA"/>
</dbReference>
<dbReference type="RefSeq" id="NP_833561.1">
    <property type="nucleotide sequence ID" value="NC_004722.1"/>
</dbReference>
<dbReference type="RefSeq" id="WP_000170278.1">
    <property type="nucleotide sequence ID" value="NZ_CP138336.1"/>
</dbReference>
<dbReference type="SMR" id="Q819W5"/>
<dbReference type="STRING" id="226900.BC_3840"/>
<dbReference type="KEGG" id="bce:BC3840"/>
<dbReference type="PATRIC" id="fig|226900.8.peg.3959"/>
<dbReference type="HOGENOM" id="CLU_077636_3_1_9"/>
<dbReference type="OrthoDB" id="9810331at2"/>
<dbReference type="Proteomes" id="UP000001417">
    <property type="component" value="Chromosome"/>
</dbReference>
<dbReference type="GO" id="GO:0005829">
    <property type="term" value="C:cytosol"/>
    <property type="evidence" value="ECO:0000318"/>
    <property type="project" value="GO_Central"/>
</dbReference>
<dbReference type="GO" id="GO:0005840">
    <property type="term" value="C:ribosome"/>
    <property type="evidence" value="ECO:0007669"/>
    <property type="project" value="InterPro"/>
</dbReference>
<dbReference type="GO" id="GO:0043022">
    <property type="term" value="F:ribosome binding"/>
    <property type="evidence" value="ECO:0007669"/>
    <property type="project" value="InterPro"/>
</dbReference>
<dbReference type="GO" id="GO:0030490">
    <property type="term" value="P:maturation of SSU-rRNA"/>
    <property type="evidence" value="ECO:0000318"/>
    <property type="project" value="GO_Central"/>
</dbReference>
<dbReference type="Gene3D" id="2.30.30.240">
    <property type="entry name" value="PRC-barrel domain"/>
    <property type="match status" value="1"/>
</dbReference>
<dbReference type="Gene3D" id="2.40.30.60">
    <property type="entry name" value="RimM"/>
    <property type="match status" value="1"/>
</dbReference>
<dbReference type="HAMAP" id="MF_00014">
    <property type="entry name" value="Ribosome_mat_RimM"/>
    <property type="match status" value="1"/>
</dbReference>
<dbReference type="InterPro" id="IPR027275">
    <property type="entry name" value="PRC-brl_dom"/>
</dbReference>
<dbReference type="InterPro" id="IPR011033">
    <property type="entry name" value="PRC_barrel-like_sf"/>
</dbReference>
<dbReference type="InterPro" id="IPR011961">
    <property type="entry name" value="RimM"/>
</dbReference>
<dbReference type="InterPro" id="IPR002676">
    <property type="entry name" value="RimM_N"/>
</dbReference>
<dbReference type="InterPro" id="IPR036976">
    <property type="entry name" value="RimM_N_sf"/>
</dbReference>
<dbReference type="InterPro" id="IPR009000">
    <property type="entry name" value="Transl_B-barrel_sf"/>
</dbReference>
<dbReference type="NCBIfam" id="TIGR02273">
    <property type="entry name" value="16S_RimM"/>
    <property type="match status" value="1"/>
</dbReference>
<dbReference type="PANTHER" id="PTHR33692">
    <property type="entry name" value="RIBOSOME MATURATION FACTOR RIMM"/>
    <property type="match status" value="1"/>
</dbReference>
<dbReference type="PANTHER" id="PTHR33692:SF1">
    <property type="entry name" value="RIBOSOME MATURATION FACTOR RIMM"/>
    <property type="match status" value="1"/>
</dbReference>
<dbReference type="Pfam" id="PF05239">
    <property type="entry name" value="PRC"/>
    <property type="match status" value="1"/>
</dbReference>
<dbReference type="Pfam" id="PF01782">
    <property type="entry name" value="RimM"/>
    <property type="match status" value="1"/>
</dbReference>
<dbReference type="SUPFAM" id="SSF50346">
    <property type="entry name" value="PRC-barrel domain"/>
    <property type="match status" value="1"/>
</dbReference>
<dbReference type="SUPFAM" id="SSF50447">
    <property type="entry name" value="Translation proteins"/>
    <property type="match status" value="1"/>
</dbReference>
<sequence>MTKWFNVGKIVNTHGVRGEIRVISRTDFPEERYKVGNTLYISNEKGTDYLPVKVTSHRQHKTFDLLTFEGYNNVDEVEKFKGSLIKVPEEQLGELAEGEYYYHEIIGCSVVTEEGEALGTIKEILSPGANDVWVIKRPKGQDLLIPYIDDVVLQVNIENKLVTIHVMEGLL</sequence>
<comment type="function">
    <text evidence="1">An accessory protein needed during the final step in the assembly of 30S ribosomal subunit, possibly for assembly of the head region. Essential for efficient processing of 16S rRNA. May be needed both before and after RbfA during the maturation of 16S rRNA. It has affinity for free ribosomal 30S subunits but not for 70S ribosomes.</text>
</comment>
<comment type="subunit">
    <text evidence="1">Binds ribosomal protein uS19.</text>
</comment>
<comment type="subcellular location">
    <subcellularLocation>
        <location evidence="1">Cytoplasm</location>
    </subcellularLocation>
</comment>
<comment type="domain">
    <text evidence="1">The PRC barrel domain binds ribosomal protein uS19.</text>
</comment>
<comment type="similarity">
    <text evidence="1">Belongs to the RimM family.</text>
</comment>
<comment type="sequence caution" evidence="2">
    <conflict type="erroneous initiation">
        <sequence resource="EMBL-CDS" id="AAP10762"/>
    </conflict>
</comment>
<protein>
    <recommendedName>
        <fullName evidence="1">Ribosome maturation factor RimM</fullName>
    </recommendedName>
</protein>
<reference key="1">
    <citation type="journal article" date="2003" name="Nature">
        <title>Genome sequence of Bacillus cereus and comparative analysis with Bacillus anthracis.</title>
        <authorList>
            <person name="Ivanova N."/>
            <person name="Sorokin A."/>
            <person name="Anderson I."/>
            <person name="Galleron N."/>
            <person name="Candelon B."/>
            <person name="Kapatral V."/>
            <person name="Bhattacharyya A."/>
            <person name="Reznik G."/>
            <person name="Mikhailova N."/>
            <person name="Lapidus A."/>
            <person name="Chu L."/>
            <person name="Mazur M."/>
            <person name="Goltsman E."/>
            <person name="Larsen N."/>
            <person name="D'Souza M."/>
            <person name="Walunas T."/>
            <person name="Grechkin Y."/>
            <person name="Pusch G."/>
            <person name="Haselkorn R."/>
            <person name="Fonstein M."/>
            <person name="Ehrlich S.D."/>
            <person name="Overbeek R."/>
            <person name="Kyrpides N.C."/>
        </authorList>
    </citation>
    <scope>NUCLEOTIDE SEQUENCE [LARGE SCALE GENOMIC DNA]</scope>
    <source>
        <strain>ATCC 14579 / DSM 31 / CCUG 7414 / JCM 2152 / NBRC 15305 / NCIMB 9373 / NCTC 2599 / NRRL B-3711</strain>
    </source>
</reference>
<keyword id="KW-0143">Chaperone</keyword>
<keyword id="KW-0963">Cytoplasm</keyword>
<keyword id="KW-1185">Reference proteome</keyword>
<keyword id="KW-0690">Ribosome biogenesis</keyword>
<keyword id="KW-0698">rRNA processing</keyword>
<feature type="chain" id="PRO_0000163247" description="Ribosome maturation factor RimM">
    <location>
        <begin position="1"/>
        <end position="171"/>
    </location>
</feature>
<feature type="domain" description="PRC barrel" evidence="1">
    <location>
        <begin position="97"/>
        <end position="170"/>
    </location>
</feature>
<accession>Q819W5</accession>